<sequence>MEVGSNEVKGKIVEVLGPVVDAEFPRDGVPDILDALRIEREDSRDLILEVQQHLGERRVRAIAMDSTDGLQRGQAIAATNQPISVPIGEEIRGRLFNVVGQPIDGLPEPDVDERRAIHQDPPEYNELTGSQEVLETGIKVMDLIQPVPKGGKVGLFGGAGVGKTVLIMELINNIAKAHEGLSVFSGVGERTREGNDLLREMIEAGVMTYGEEFRESMESGGWDLDKVDFDEMNSESNISLVFGQMNEPPGARARVGLTGLTIAEYFRDLGGRDVLFFLDNIFRFVQAGQEMSALMGRMPSAVGYQPTLASEMGDLQERITSTQEGSITSFQAVYVPADDLTDPAPATTFAHLDCTTVLSRQLSTQGIYPAIDPLDSTSQMLNERALGTEHYETAQDVKEILQRYEELQDIIAILGMDELSDEDKQAVNRARRVQRFLSQPFFVAEQFTGQPGKYVPIEETIRGFRMILDGELDHLPERAFLLKGTIDEVIEAGEEMAEEA</sequence>
<proteinExistence type="inferred from homology"/>
<feature type="chain" id="PRO_0000254368" description="ATP synthase subunit beta">
    <location>
        <begin position="1"/>
        <end position="500"/>
    </location>
</feature>
<feature type="binding site" evidence="1">
    <location>
        <begin position="157"/>
        <end position="164"/>
    </location>
    <ligand>
        <name>ATP</name>
        <dbReference type="ChEBI" id="CHEBI:30616"/>
    </ligand>
</feature>
<protein>
    <recommendedName>
        <fullName evidence="1">ATP synthase subunit beta</fullName>
        <ecNumber evidence="1">7.1.2.2</ecNumber>
    </recommendedName>
    <alternativeName>
        <fullName evidence="1">ATP synthase F1 sector subunit beta</fullName>
    </alternativeName>
    <alternativeName>
        <fullName evidence="1">F-ATPase subunit beta</fullName>
    </alternativeName>
</protein>
<reference key="1">
    <citation type="journal article" date="2005" name="Proc. Natl. Acad. Sci. U.S.A.">
        <title>The genome of Salinibacter ruber: convergence and gene exchange among hyperhalophilic bacteria and archaea.</title>
        <authorList>
            <person name="Mongodin E.F."/>
            <person name="Nelson K.E."/>
            <person name="Daugherty S."/>
            <person name="DeBoy R.T."/>
            <person name="Wister J."/>
            <person name="Khouri H."/>
            <person name="Weidman J."/>
            <person name="Walsh D.A."/>
            <person name="Papke R.T."/>
            <person name="Sanchez Perez G."/>
            <person name="Sharma A.K."/>
            <person name="Nesbo C.L."/>
            <person name="MacLeod D."/>
            <person name="Bapteste E."/>
            <person name="Doolittle W.F."/>
            <person name="Charlebois R.L."/>
            <person name="Legault B."/>
            <person name="Rodriguez-Valera F."/>
        </authorList>
    </citation>
    <scope>NUCLEOTIDE SEQUENCE [LARGE SCALE GENOMIC DNA]</scope>
    <source>
        <strain>DSM 13855 / CECT 5946 / M31</strain>
    </source>
</reference>
<keyword id="KW-0066">ATP synthesis</keyword>
<keyword id="KW-0067">ATP-binding</keyword>
<keyword id="KW-0997">Cell inner membrane</keyword>
<keyword id="KW-1003">Cell membrane</keyword>
<keyword id="KW-0139">CF(1)</keyword>
<keyword id="KW-0375">Hydrogen ion transport</keyword>
<keyword id="KW-0406">Ion transport</keyword>
<keyword id="KW-0472">Membrane</keyword>
<keyword id="KW-0547">Nucleotide-binding</keyword>
<keyword id="KW-1185">Reference proteome</keyword>
<keyword id="KW-1278">Translocase</keyword>
<keyword id="KW-0813">Transport</keyword>
<gene>
    <name evidence="1" type="primary">atpD</name>
    <name type="ordered locus">SRU_2429</name>
</gene>
<comment type="function">
    <text evidence="1">Produces ATP from ADP in the presence of a proton gradient across the membrane. The catalytic sites are hosted primarily by the beta subunits.</text>
</comment>
<comment type="catalytic activity">
    <reaction evidence="1">
        <text>ATP + H2O + 4 H(+)(in) = ADP + phosphate + 5 H(+)(out)</text>
        <dbReference type="Rhea" id="RHEA:57720"/>
        <dbReference type="ChEBI" id="CHEBI:15377"/>
        <dbReference type="ChEBI" id="CHEBI:15378"/>
        <dbReference type="ChEBI" id="CHEBI:30616"/>
        <dbReference type="ChEBI" id="CHEBI:43474"/>
        <dbReference type="ChEBI" id="CHEBI:456216"/>
        <dbReference type="EC" id="7.1.2.2"/>
    </reaction>
</comment>
<comment type="subunit">
    <text evidence="1">F-type ATPases have 2 components, CF(1) - the catalytic core - and CF(0) - the membrane proton channel. CF(1) has five subunits: alpha(3), beta(3), gamma(1), delta(1), epsilon(1). CF(0) has three main subunits: a(1), b(2) and c(9-12). The alpha and beta chains form an alternating ring which encloses part of the gamma chain. CF(1) is attached to CF(0) by a central stalk formed by the gamma and epsilon chains, while a peripheral stalk is formed by the delta and b chains.</text>
</comment>
<comment type="subcellular location">
    <subcellularLocation>
        <location evidence="1">Cell inner membrane</location>
        <topology evidence="1">Peripheral membrane protein</topology>
    </subcellularLocation>
</comment>
<comment type="similarity">
    <text evidence="1">Belongs to the ATPase alpha/beta chains family.</text>
</comment>
<accession>Q2RZV3</accession>
<evidence type="ECO:0000255" key="1">
    <source>
        <dbReference type="HAMAP-Rule" id="MF_01347"/>
    </source>
</evidence>
<organism>
    <name type="scientific">Salinibacter ruber (strain DSM 13855 / M31)</name>
    <dbReference type="NCBI Taxonomy" id="309807"/>
    <lineage>
        <taxon>Bacteria</taxon>
        <taxon>Pseudomonadati</taxon>
        <taxon>Rhodothermota</taxon>
        <taxon>Rhodothermia</taxon>
        <taxon>Rhodothermales</taxon>
        <taxon>Salinibacteraceae</taxon>
        <taxon>Salinibacter</taxon>
    </lineage>
</organism>
<name>ATPB_SALRD</name>
<dbReference type="EC" id="7.1.2.2" evidence="1"/>
<dbReference type="EMBL" id="CP000159">
    <property type="protein sequence ID" value="ABC46342.1"/>
    <property type="molecule type" value="Genomic_DNA"/>
</dbReference>
<dbReference type="RefSeq" id="WP_011405146.1">
    <property type="nucleotide sequence ID" value="NC_007677.1"/>
</dbReference>
<dbReference type="RefSeq" id="YP_446528.1">
    <property type="nucleotide sequence ID" value="NC_007677.1"/>
</dbReference>
<dbReference type="SMR" id="Q2RZV3"/>
<dbReference type="STRING" id="309807.SRU_2429"/>
<dbReference type="EnsemblBacteria" id="ABC46342">
    <property type="protein sequence ID" value="ABC46342"/>
    <property type="gene ID" value="SRU_2429"/>
</dbReference>
<dbReference type="GeneID" id="83729448"/>
<dbReference type="KEGG" id="sru:SRU_2429"/>
<dbReference type="PATRIC" id="fig|309807.25.peg.2531"/>
<dbReference type="eggNOG" id="COG0055">
    <property type="taxonomic scope" value="Bacteria"/>
</dbReference>
<dbReference type="HOGENOM" id="CLU_022398_0_2_10"/>
<dbReference type="OrthoDB" id="9801639at2"/>
<dbReference type="Proteomes" id="UP000008674">
    <property type="component" value="Chromosome"/>
</dbReference>
<dbReference type="GO" id="GO:0005886">
    <property type="term" value="C:plasma membrane"/>
    <property type="evidence" value="ECO:0007669"/>
    <property type="project" value="UniProtKB-SubCell"/>
</dbReference>
<dbReference type="GO" id="GO:0045259">
    <property type="term" value="C:proton-transporting ATP synthase complex"/>
    <property type="evidence" value="ECO:0007669"/>
    <property type="project" value="UniProtKB-KW"/>
</dbReference>
<dbReference type="GO" id="GO:0005524">
    <property type="term" value="F:ATP binding"/>
    <property type="evidence" value="ECO:0007669"/>
    <property type="project" value="UniProtKB-UniRule"/>
</dbReference>
<dbReference type="GO" id="GO:0016887">
    <property type="term" value="F:ATP hydrolysis activity"/>
    <property type="evidence" value="ECO:0007669"/>
    <property type="project" value="InterPro"/>
</dbReference>
<dbReference type="GO" id="GO:0046933">
    <property type="term" value="F:proton-transporting ATP synthase activity, rotational mechanism"/>
    <property type="evidence" value="ECO:0007669"/>
    <property type="project" value="UniProtKB-UniRule"/>
</dbReference>
<dbReference type="CDD" id="cd18110">
    <property type="entry name" value="ATP-synt_F1_beta_C"/>
    <property type="match status" value="1"/>
</dbReference>
<dbReference type="CDD" id="cd18115">
    <property type="entry name" value="ATP-synt_F1_beta_N"/>
    <property type="match status" value="1"/>
</dbReference>
<dbReference type="CDD" id="cd01133">
    <property type="entry name" value="F1-ATPase_beta_CD"/>
    <property type="match status" value="1"/>
</dbReference>
<dbReference type="FunFam" id="1.10.1140.10:FF:000001">
    <property type="entry name" value="ATP synthase subunit beta"/>
    <property type="match status" value="1"/>
</dbReference>
<dbReference type="FunFam" id="3.40.50.300:FF:001630">
    <property type="entry name" value="ATP synthase subunit beta"/>
    <property type="match status" value="1"/>
</dbReference>
<dbReference type="Gene3D" id="2.40.10.170">
    <property type="match status" value="1"/>
</dbReference>
<dbReference type="Gene3D" id="1.10.1140.10">
    <property type="entry name" value="Bovine Mitochondrial F1-atpase, Atp Synthase Beta Chain, Chain D, domain 3"/>
    <property type="match status" value="1"/>
</dbReference>
<dbReference type="Gene3D" id="3.40.50.300">
    <property type="entry name" value="P-loop containing nucleotide triphosphate hydrolases"/>
    <property type="match status" value="1"/>
</dbReference>
<dbReference type="HAMAP" id="MF_01347">
    <property type="entry name" value="ATP_synth_beta_bact"/>
    <property type="match status" value="1"/>
</dbReference>
<dbReference type="InterPro" id="IPR003593">
    <property type="entry name" value="AAA+_ATPase"/>
</dbReference>
<dbReference type="InterPro" id="IPR055190">
    <property type="entry name" value="ATP-synt_VA_C"/>
</dbReference>
<dbReference type="InterPro" id="IPR005722">
    <property type="entry name" value="ATP_synth_F1_bsu"/>
</dbReference>
<dbReference type="InterPro" id="IPR020003">
    <property type="entry name" value="ATPase_a/bsu_AS"/>
</dbReference>
<dbReference type="InterPro" id="IPR050053">
    <property type="entry name" value="ATPase_alpha/beta_chains"/>
</dbReference>
<dbReference type="InterPro" id="IPR004100">
    <property type="entry name" value="ATPase_F1/V1/A1_a/bsu_N"/>
</dbReference>
<dbReference type="InterPro" id="IPR036121">
    <property type="entry name" value="ATPase_F1/V1/A1_a/bsu_N_sf"/>
</dbReference>
<dbReference type="InterPro" id="IPR000194">
    <property type="entry name" value="ATPase_F1/V1/A1_a/bsu_nucl-bd"/>
</dbReference>
<dbReference type="InterPro" id="IPR024034">
    <property type="entry name" value="ATPase_F1/V1_b/a_C"/>
</dbReference>
<dbReference type="InterPro" id="IPR027417">
    <property type="entry name" value="P-loop_NTPase"/>
</dbReference>
<dbReference type="NCBIfam" id="TIGR01039">
    <property type="entry name" value="atpD"/>
    <property type="match status" value="1"/>
</dbReference>
<dbReference type="PANTHER" id="PTHR15184">
    <property type="entry name" value="ATP SYNTHASE"/>
    <property type="match status" value="1"/>
</dbReference>
<dbReference type="PANTHER" id="PTHR15184:SF71">
    <property type="entry name" value="ATP SYNTHASE SUBUNIT BETA, MITOCHONDRIAL"/>
    <property type="match status" value="1"/>
</dbReference>
<dbReference type="Pfam" id="PF00006">
    <property type="entry name" value="ATP-synt_ab"/>
    <property type="match status" value="1"/>
</dbReference>
<dbReference type="Pfam" id="PF02874">
    <property type="entry name" value="ATP-synt_ab_N"/>
    <property type="match status" value="1"/>
</dbReference>
<dbReference type="Pfam" id="PF22919">
    <property type="entry name" value="ATP-synt_VA_C"/>
    <property type="match status" value="1"/>
</dbReference>
<dbReference type="SMART" id="SM00382">
    <property type="entry name" value="AAA"/>
    <property type="match status" value="1"/>
</dbReference>
<dbReference type="SUPFAM" id="SSF47917">
    <property type="entry name" value="C-terminal domain of alpha and beta subunits of F1 ATP synthase"/>
    <property type="match status" value="1"/>
</dbReference>
<dbReference type="SUPFAM" id="SSF50615">
    <property type="entry name" value="N-terminal domain of alpha and beta subunits of F1 ATP synthase"/>
    <property type="match status" value="1"/>
</dbReference>
<dbReference type="SUPFAM" id="SSF52540">
    <property type="entry name" value="P-loop containing nucleoside triphosphate hydrolases"/>
    <property type="match status" value="1"/>
</dbReference>
<dbReference type="PROSITE" id="PS00152">
    <property type="entry name" value="ATPASE_ALPHA_BETA"/>
    <property type="match status" value="1"/>
</dbReference>